<reference key="1">
    <citation type="journal article" date="1992" name="Virology">
        <title>The DNA sequence of equine herpesvirus-1.</title>
        <authorList>
            <person name="Telford E.A.R."/>
            <person name="Watson M.S."/>
            <person name="McBride K."/>
            <person name="Davison A.J."/>
        </authorList>
    </citation>
    <scope>NUCLEOTIDE SEQUENCE [LARGE SCALE GENOMIC DNA]</scope>
</reference>
<name>PAP_EHV1B</name>
<protein>
    <recommendedName>
        <fullName>DNA polymerase processivity factor</fullName>
    </recommendedName>
    <alternativeName>
        <fullName>DNA-binding gene 18 protein</fullName>
    </alternativeName>
    <alternativeName>
        <fullName>Polymerase accessory protein</fullName>
        <shortName>PAP</shortName>
    </alternativeName>
</protein>
<comment type="function">
    <text evidence="1">Plays an essential role in viral DNA replication by acting as the polymerase accessory subunit. Associates with the viral polymerase to increase its processivity and forms high-affinity direct interactions with DNA. Facilitates the origin-binding protein loading onto DNA thus increasing its ability to assemble into a functional complex capable of unwinding duplex DNA (By similarity).</text>
</comment>
<comment type="subunit">
    <text evidence="1">Interacts with the DNA polymerase catalytic subunit. Interacts with the origin-binding protein (By similarity).</text>
</comment>
<comment type="subcellular location">
    <subcellularLocation>
        <location evidence="1">Host nucleus</location>
    </subcellularLocation>
</comment>
<comment type="similarity">
    <text evidence="4">Belongs to the herpesviridae DNA polymerase processivity factor family.</text>
</comment>
<feature type="chain" id="PRO_0000116062" description="DNA polymerase processivity factor">
    <location>
        <begin position="1"/>
        <end position="405"/>
    </location>
</feature>
<feature type="region of interest" description="Disordered" evidence="3">
    <location>
        <begin position="354"/>
        <end position="376"/>
    </location>
</feature>
<feature type="short sequence motif" description="Bipartite nuclear localization signal" evidence="2">
    <location>
        <begin position="358"/>
        <end position="373"/>
    </location>
</feature>
<organism>
    <name type="scientific">Equine herpesvirus 1 (strain Ab4p)</name>
    <name type="common">EHV-1</name>
    <name type="synonym">Equine abortion virus</name>
    <dbReference type="NCBI Taxonomy" id="31520"/>
    <lineage>
        <taxon>Viruses</taxon>
        <taxon>Duplodnaviria</taxon>
        <taxon>Heunggongvirae</taxon>
        <taxon>Peploviricota</taxon>
        <taxon>Herviviricetes</taxon>
        <taxon>Herpesvirales</taxon>
        <taxon>Orthoherpesviridae</taxon>
        <taxon>Alphaherpesvirinae</taxon>
        <taxon>Varicellovirus</taxon>
        <taxon>Varicellovirus equidalpha1</taxon>
        <taxon>Equid alphaherpesvirus 1</taxon>
    </lineage>
</organism>
<evidence type="ECO:0000250" key="1"/>
<evidence type="ECO:0000255" key="2"/>
<evidence type="ECO:0000256" key="3">
    <source>
        <dbReference type="SAM" id="MobiDB-lite"/>
    </source>
</evidence>
<evidence type="ECO:0000305" key="4"/>
<organismHost>
    <name type="scientific">Equus caballus</name>
    <name type="common">Horse</name>
    <dbReference type="NCBI Taxonomy" id="9796"/>
</organismHost>
<accession>P28958</accession>
<accession>Q6S6Q3</accession>
<keyword id="KW-0235">DNA replication</keyword>
<keyword id="KW-0238">DNA-binding</keyword>
<keyword id="KW-1048">Host nucleus</keyword>
<keyword id="KW-1185">Reference proteome</keyword>
<gene>
    <name type="ordered locus">18</name>
</gene>
<proteinExistence type="inferred from homology"/>
<dbReference type="EMBL" id="AY665713">
    <property type="protein sequence ID" value="AAT67275.1"/>
    <property type="molecule type" value="Genomic_DNA"/>
</dbReference>
<dbReference type="PIR" id="A36797">
    <property type="entry name" value="WZBEB2"/>
</dbReference>
<dbReference type="SMR" id="P28958"/>
<dbReference type="IntAct" id="P28958">
    <property type="interactions" value="1"/>
</dbReference>
<dbReference type="KEGG" id="vg:1487522"/>
<dbReference type="Proteomes" id="UP000001189">
    <property type="component" value="Segment"/>
</dbReference>
<dbReference type="GO" id="GO:0042025">
    <property type="term" value="C:host cell nucleus"/>
    <property type="evidence" value="ECO:0007669"/>
    <property type="project" value="UniProtKB-SubCell"/>
</dbReference>
<dbReference type="GO" id="GO:0003677">
    <property type="term" value="F:DNA binding"/>
    <property type="evidence" value="ECO:0007669"/>
    <property type="project" value="UniProtKB-KW"/>
</dbReference>
<dbReference type="GO" id="GO:0006260">
    <property type="term" value="P:DNA replication"/>
    <property type="evidence" value="ECO:0007669"/>
    <property type="project" value="UniProtKB-KW"/>
</dbReference>
<dbReference type="GO" id="GO:1900264">
    <property type="term" value="P:positive regulation of DNA-directed DNA polymerase activity"/>
    <property type="evidence" value="ECO:0000314"/>
    <property type="project" value="AgBase"/>
</dbReference>
<dbReference type="Gene3D" id="3.70.10.10">
    <property type="match status" value="1"/>
</dbReference>
<dbReference type="InterPro" id="IPR046938">
    <property type="entry name" value="DNA_clamp_sf"/>
</dbReference>
<dbReference type="InterPro" id="IPR003202">
    <property type="entry name" value="Herpes_UL42"/>
</dbReference>
<dbReference type="Pfam" id="PF02282">
    <property type="entry name" value="Herpes_UL42"/>
    <property type="match status" value="2"/>
</dbReference>
<dbReference type="SUPFAM" id="SSF55979">
    <property type="entry name" value="DNA clamp"/>
    <property type="match status" value="2"/>
</dbReference>
<sequence length="405" mass="45087">MALPRAMRPGGSHPNNFLFNTLPVIDNPVERQRAMAVFERESLRDAFEMLTPIAPSLKNAFLIFNEDGLLIHTSVGGEQVYIPIQTNNMESYSWKKAPPAVFLANVDGRRGLLDAFKAKTQTNVSKVVFEIENYSPSRILTQTVFSARDQTEEDTEMGSDAEGATQTVSSRLVKHEFNNYALMLPTRQPDVSMSLSKAQLNKILGVCKQAGDPITFQCLFDDTLQVRSGDRQVVFSVDYQHADNCGVESSSSLLEKMPMKTKKSAPEPIRGISGRRLFTLVLDEDTNFKQLIQKLKLKNAGAVLNFFLDPDSIPMIGLSTKQPFSVMMFFMCSYPTQPCQVGFSPAAFSSTPMGAGVKRRASEEEESDQPPKKLFPDGKLFKSNFVLLMDKTGAKIPCPEQPMHF</sequence>